<evidence type="ECO:0000255" key="1">
    <source>
        <dbReference type="HAMAP-Rule" id="MF_01363"/>
    </source>
</evidence>
<evidence type="ECO:0000305" key="2"/>
<protein>
    <recommendedName>
        <fullName evidence="1">Large ribosomal subunit protein bL21</fullName>
    </recommendedName>
    <alternativeName>
        <fullName evidence="2">50S ribosomal protein L21</fullName>
    </alternativeName>
</protein>
<proteinExistence type="inferred from homology"/>
<feature type="chain" id="PRO_1000166708" description="Large ribosomal subunit protein bL21">
    <location>
        <begin position="1"/>
        <end position="108"/>
    </location>
</feature>
<reference key="1">
    <citation type="journal article" date="2009" name="Science">
        <title>The dynamics and time scale of ongoing genomic erosion in symbiotic bacteria.</title>
        <authorList>
            <person name="Moran N.A."/>
            <person name="McLaughlin H.J."/>
            <person name="Sorek R."/>
        </authorList>
    </citation>
    <scope>NUCLEOTIDE SEQUENCE [LARGE SCALE GENOMIC DNA]</scope>
    <source>
        <strain>Tuc7</strain>
    </source>
</reference>
<comment type="function">
    <text evidence="1">This protein binds to 23S rRNA in the presence of protein L20.</text>
</comment>
<comment type="subunit">
    <text evidence="1">Part of the 50S ribosomal subunit. Contacts protein L20.</text>
</comment>
<comment type="similarity">
    <text evidence="1">Belongs to the bacterial ribosomal protein bL21 family.</text>
</comment>
<keyword id="KW-0687">Ribonucleoprotein</keyword>
<keyword id="KW-0689">Ribosomal protein</keyword>
<keyword id="KW-0694">RNA-binding</keyword>
<keyword id="KW-0699">rRNA-binding</keyword>
<name>RL21_BUCAT</name>
<organism>
    <name type="scientific">Buchnera aphidicola subsp. Acyrthosiphon pisum (strain Tuc7)</name>
    <dbReference type="NCBI Taxonomy" id="561501"/>
    <lineage>
        <taxon>Bacteria</taxon>
        <taxon>Pseudomonadati</taxon>
        <taxon>Pseudomonadota</taxon>
        <taxon>Gammaproteobacteria</taxon>
        <taxon>Enterobacterales</taxon>
        <taxon>Erwiniaceae</taxon>
        <taxon>Buchnera</taxon>
    </lineage>
</organism>
<dbReference type="EMBL" id="CP001158">
    <property type="protein sequence ID" value="ACL30187.1"/>
    <property type="molecule type" value="Genomic_DNA"/>
</dbReference>
<dbReference type="RefSeq" id="WP_009874344.1">
    <property type="nucleotide sequence ID" value="NC_011834.1"/>
</dbReference>
<dbReference type="SMR" id="B8D7S2"/>
<dbReference type="KEGG" id="bau:BUAPTUC7_381"/>
<dbReference type="HOGENOM" id="CLU_061463_3_3_6"/>
<dbReference type="GO" id="GO:0005737">
    <property type="term" value="C:cytoplasm"/>
    <property type="evidence" value="ECO:0007669"/>
    <property type="project" value="UniProtKB-ARBA"/>
</dbReference>
<dbReference type="GO" id="GO:1990904">
    <property type="term" value="C:ribonucleoprotein complex"/>
    <property type="evidence" value="ECO:0007669"/>
    <property type="project" value="UniProtKB-KW"/>
</dbReference>
<dbReference type="GO" id="GO:0005840">
    <property type="term" value="C:ribosome"/>
    <property type="evidence" value="ECO:0007669"/>
    <property type="project" value="UniProtKB-KW"/>
</dbReference>
<dbReference type="GO" id="GO:0019843">
    <property type="term" value="F:rRNA binding"/>
    <property type="evidence" value="ECO:0007669"/>
    <property type="project" value="UniProtKB-UniRule"/>
</dbReference>
<dbReference type="GO" id="GO:0003735">
    <property type="term" value="F:structural constituent of ribosome"/>
    <property type="evidence" value="ECO:0007669"/>
    <property type="project" value="InterPro"/>
</dbReference>
<dbReference type="GO" id="GO:0006412">
    <property type="term" value="P:translation"/>
    <property type="evidence" value="ECO:0007669"/>
    <property type="project" value="UniProtKB-UniRule"/>
</dbReference>
<dbReference type="HAMAP" id="MF_01363">
    <property type="entry name" value="Ribosomal_bL21"/>
    <property type="match status" value="1"/>
</dbReference>
<dbReference type="InterPro" id="IPR028909">
    <property type="entry name" value="bL21-like"/>
</dbReference>
<dbReference type="InterPro" id="IPR036164">
    <property type="entry name" value="bL21-like_sf"/>
</dbReference>
<dbReference type="InterPro" id="IPR001787">
    <property type="entry name" value="Ribosomal_bL21"/>
</dbReference>
<dbReference type="InterPro" id="IPR018258">
    <property type="entry name" value="Ribosomal_bL21_CS"/>
</dbReference>
<dbReference type="NCBIfam" id="TIGR00061">
    <property type="entry name" value="L21"/>
    <property type="match status" value="1"/>
</dbReference>
<dbReference type="PANTHER" id="PTHR21349">
    <property type="entry name" value="50S RIBOSOMAL PROTEIN L21"/>
    <property type="match status" value="1"/>
</dbReference>
<dbReference type="PANTHER" id="PTHR21349:SF0">
    <property type="entry name" value="LARGE RIBOSOMAL SUBUNIT PROTEIN BL21M"/>
    <property type="match status" value="1"/>
</dbReference>
<dbReference type="Pfam" id="PF00829">
    <property type="entry name" value="Ribosomal_L21p"/>
    <property type="match status" value="1"/>
</dbReference>
<dbReference type="SUPFAM" id="SSF141091">
    <property type="entry name" value="L21p-like"/>
    <property type="match status" value="1"/>
</dbReference>
<dbReference type="PROSITE" id="PS01169">
    <property type="entry name" value="RIBOSOMAL_L21"/>
    <property type="match status" value="1"/>
</dbReference>
<sequence>MYAVFISGGKQYRVVKNQIIRLEKLNSPLGTTIEFDKILMLFDKDSIKIGTPFVEGGTIKAHIQNHGRLKKIKIIKFNRRKHYKKQQGHRQYFTDVKIIDINSIKGEV</sequence>
<accession>B8D7S2</accession>
<gene>
    <name evidence="1" type="primary">rplU</name>
    <name type="ordered locus">BUAPTUC7_381</name>
</gene>